<evidence type="ECO:0000255" key="1">
    <source>
        <dbReference type="HAMAP-Rule" id="MF_01328"/>
    </source>
</evidence>
<evidence type="ECO:0000256" key="2">
    <source>
        <dbReference type="SAM" id="MobiDB-lite"/>
    </source>
</evidence>
<evidence type="ECO:0000305" key="3"/>
<proteinExistence type="inferred from homology"/>
<reference key="1">
    <citation type="journal article" date="2005" name="Proc. Natl. Acad. Sci. U.S.A.">
        <title>Complete genome sequence of Vibrio fischeri: a symbiotic bacterium with pathogenic congeners.</title>
        <authorList>
            <person name="Ruby E.G."/>
            <person name="Urbanowski M."/>
            <person name="Campbell J."/>
            <person name="Dunn A."/>
            <person name="Faini M."/>
            <person name="Gunsalus R."/>
            <person name="Lostroh P."/>
            <person name="Lupp C."/>
            <person name="McCann J."/>
            <person name="Millikan D."/>
            <person name="Schaefer A."/>
            <person name="Stabb E."/>
            <person name="Stevens A."/>
            <person name="Visick K."/>
            <person name="Whistler C."/>
            <person name="Greenberg E.P."/>
        </authorList>
    </citation>
    <scope>NUCLEOTIDE SEQUENCE [LARGE SCALE GENOMIC DNA]</scope>
    <source>
        <strain>ATCC 700601 / ES114</strain>
    </source>
</reference>
<protein>
    <recommendedName>
        <fullName evidence="1">Large ribosomal subunit protein uL4</fullName>
    </recommendedName>
    <alternativeName>
        <fullName evidence="3">50S ribosomal protein L4</fullName>
    </alternativeName>
</protein>
<dbReference type="EMBL" id="CP000020">
    <property type="protein sequence ID" value="AAW84732.1"/>
    <property type="molecule type" value="Genomic_DNA"/>
</dbReference>
<dbReference type="RefSeq" id="WP_005417226.1">
    <property type="nucleotide sequence ID" value="NZ_CAWLES010000001.1"/>
</dbReference>
<dbReference type="RefSeq" id="YP_203620.1">
    <property type="nucleotide sequence ID" value="NC_006840.2"/>
</dbReference>
<dbReference type="SMR" id="Q5E8B4"/>
<dbReference type="STRING" id="312309.VF_0237"/>
<dbReference type="EnsemblBacteria" id="AAW84732">
    <property type="protein sequence ID" value="AAW84732"/>
    <property type="gene ID" value="VF_0237"/>
</dbReference>
<dbReference type="GeneID" id="54162859"/>
<dbReference type="KEGG" id="vfi:VF_0237"/>
<dbReference type="PATRIC" id="fig|312309.11.peg.233"/>
<dbReference type="eggNOG" id="COG0088">
    <property type="taxonomic scope" value="Bacteria"/>
</dbReference>
<dbReference type="HOGENOM" id="CLU_041575_5_2_6"/>
<dbReference type="OrthoDB" id="9803201at2"/>
<dbReference type="Proteomes" id="UP000000537">
    <property type="component" value="Chromosome I"/>
</dbReference>
<dbReference type="GO" id="GO:1990904">
    <property type="term" value="C:ribonucleoprotein complex"/>
    <property type="evidence" value="ECO:0007669"/>
    <property type="project" value="UniProtKB-KW"/>
</dbReference>
<dbReference type="GO" id="GO:0005840">
    <property type="term" value="C:ribosome"/>
    <property type="evidence" value="ECO:0007669"/>
    <property type="project" value="UniProtKB-KW"/>
</dbReference>
<dbReference type="GO" id="GO:0019843">
    <property type="term" value="F:rRNA binding"/>
    <property type="evidence" value="ECO:0007669"/>
    <property type="project" value="UniProtKB-UniRule"/>
</dbReference>
<dbReference type="GO" id="GO:0003735">
    <property type="term" value="F:structural constituent of ribosome"/>
    <property type="evidence" value="ECO:0007669"/>
    <property type="project" value="InterPro"/>
</dbReference>
<dbReference type="GO" id="GO:0006412">
    <property type="term" value="P:translation"/>
    <property type="evidence" value="ECO:0007669"/>
    <property type="project" value="UniProtKB-UniRule"/>
</dbReference>
<dbReference type="FunFam" id="3.40.1370.10:FF:000001">
    <property type="entry name" value="50S ribosomal protein L4"/>
    <property type="match status" value="1"/>
</dbReference>
<dbReference type="Gene3D" id="3.40.1370.10">
    <property type="match status" value="1"/>
</dbReference>
<dbReference type="HAMAP" id="MF_01328_B">
    <property type="entry name" value="Ribosomal_uL4_B"/>
    <property type="match status" value="1"/>
</dbReference>
<dbReference type="InterPro" id="IPR002136">
    <property type="entry name" value="Ribosomal_uL4"/>
</dbReference>
<dbReference type="InterPro" id="IPR013005">
    <property type="entry name" value="Ribosomal_uL4-like"/>
</dbReference>
<dbReference type="InterPro" id="IPR023574">
    <property type="entry name" value="Ribosomal_uL4_dom_sf"/>
</dbReference>
<dbReference type="NCBIfam" id="TIGR03953">
    <property type="entry name" value="rplD_bact"/>
    <property type="match status" value="1"/>
</dbReference>
<dbReference type="PANTHER" id="PTHR10746">
    <property type="entry name" value="50S RIBOSOMAL PROTEIN L4"/>
    <property type="match status" value="1"/>
</dbReference>
<dbReference type="PANTHER" id="PTHR10746:SF6">
    <property type="entry name" value="LARGE RIBOSOMAL SUBUNIT PROTEIN UL4M"/>
    <property type="match status" value="1"/>
</dbReference>
<dbReference type="Pfam" id="PF00573">
    <property type="entry name" value="Ribosomal_L4"/>
    <property type="match status" value="1"/>
</dbReference>
<dbReference type="SUPFAM" id="SSF52166">
    <property type="entry name" value="Ribosomal protein L4"/>
    <property type="match status" value="1"/>
</dbReference>
<accession>Q5E8B4</accession>
<organism>
    <name type="scientific">Aliivibrio fischeri (strain ATCC 700601 / ES114)</name>
    <name type="common">Vibrio fischeri</name>
    <dbReference type="NCBI Taxonomy" id="312309"/>
    <lineage>
        <taxon>Bacteria</taxon>
        <taxon>Pseudomonadati</taxon>
        <taxon>Pseudomonadota</taxon>
        <taxon>Gammaproteobacteria</taxon>
        <taxon>Vibrionales</taxon>
        <taxon>Vibrionaceae</taxon>
        <taxon>Aliivibrio</taxon>
    </lineage>
</organism>
<comment type="function">
    <text evidence="1">One of the primary rRNA binding proteins, this protein initially binds near the 5'-end of the 23S rRNA. It is important during the early stages of 50S assembly. It makes multiple contacts with different domains of the 23S rRNA in the assembled 50S subunit and ribosome.</text>
</comment>
<comment type="function">
    <text evidence="1">Forms part of the polypeptide exit tunnel.</text>
</comment>
<comment type="subunit">
    <text evidence="1">Part of the 50S ribosomal subunit.</text>
</comment>
<comment type="similarity">
    <text evidence="1">Belongs to the universal ribosomal protein uL4 family.</text>
</comment>
<gene>
    <name evidence="1" type="primary">rplD</name>
    <name type="ordered locus">VF_0237</name>
</gene>
<feature type="chain" id="PRO_0000242459" description="Large ribosomal subunit protein uL4">
    <location>
        <begin position="1"/>
        <end position="200"/>
    </location>
</feature>
<feature type="region of interest" description="Disordered" evidence="2">
    <location>
        <begin position="42"/>
        <end position="65"/>
    </location>
</feature>
<sequence>MELMVKGADALTVSETTFGREFNEALVHQVVVAYAAGARQGTRAQKTRSEVSGGGAKPWRQKGTGRARAGTIRSPIWRTGGVTFAAKPQDHSQKVNKKMYRGALKSILSELVRQDRLIVVDNFSVEAPKTKELVAKLKELELNDVLIVTGEVDENLFLAARNLYKVDARDVAGIDPVSLVAFDKVLMTAAAVKQVEEMLA</sequence>
<keyword id="KW-1185">Reference proteome</keyword>
<keyword id="KW-0687">Ribonucleoprotein</keyword>
<keyword id="KW-0689">Ribosomal protein</keyword>
<keyword id="KW-0694">RNA-binding</keyword>
<keyword id="KW-0699">rRNA-binding</keyword>
<name>RL4_ALIF1</name>